<evidence type="ECO:0000255" key="1"/>
<evidence type="ECO:0000256" key="2">
    <source>
        <dbReference type="SAM" id="MobiDB-lite"/>
    </source>
</evidence>
<evidence type="ECO:0000269" key="3">
    <source>
    </source>
</evidence>
<evidence type="ECO:0000269" key="4">
    <source>
    </source>
</evidence>
<evidence type="ECO:0000269" key="5">
    <source>
    </source>
</evidence>
<evidence type="ECO:0000269" key="6">
    <source>
    </source>
</evidence>
<evidence type="ECO:0000303" key="7">
    <source>
    </source>
</evidence>
<evidence type="ECO:0000303" key="8">
    <source>
    </source>
</evidence>
<evidence type="ECO:0000303" key="9">
    <source>
    </source>
</evidence>
<evidence type="ECO:0000312" key="10">
    <source>
        <dbReference type="Araport" id="AT1G15910"/>
    </source>
</evidence>
<evidence type="ECO:0000312" key="11">
    <source>
        <dbReference type="EMBL" id="AAF18488.1"/>
    </source>
</evidence>
<dbReference type="EMBL" id="AC010924">
    <property type="protein sequence ID" value="AAF18488.1"/>
    <property type="molecule type" value="Genomic_DNA"/>
</dbReference>
<dbReference type="EMBL" id="CP002684">
    <property type="protein sequence ID" value="AEE29382.1"/>
    <property type="molecule type" value="Genomic_DNA"/>
</dbReference>
<dbReference type="PIR" id="E86293">
    <property type="entry name" value="E86293"/>
</dbReference>
<dbReference type="RefSeq" id="NP_173043.1">
    <property type="nucleotide sequence ID" value="NM_101459.4"/>
</dbReference>
<dbReference type="SMR" id="Q9S9P3"/>
<dbReference type="BioGRID" id="23401">
    <property type="interactions" value="2"/>
</dbReference>
<dbReference type="FunCoup" id="Q9S9P3">
    <property type="interactions" value="473"/>
</dbReference>
<dbReference type="STRING" id="3702.Q9S9P3"/>
<dbReference type="PaxDb" id="3702-AT1G15910.1"/>
<dbReference type="ProteomicsDB" id="222594"/>
<dbReference type="EnsemblPlants" id="AT1G15910.1">
    <property type="protein sequence ID" value="AT1G15910.1"/>
    <property type="gene ID" value="AT1G15910"/>
</dbReference>
<dbReference type="GeneID" id="838161"/>
<dbReference type="Gramene" id="AT1G15910.1">
    <property type="protein sequence ID" value="AT1G15910.1"/>
    <property type="gene ID" value="AT1G15910"/>
</dbReference>
<dbReference type="KEGG" id="ath:AT1G15910"/>
<dbReference type="Araport" id="AT1G15910"/>
<dbReference type="TAIR" id="AT1G15910">
    <property type="gene designation" value="FDM1"/>
</dbReference>
<dbReference type="eggNOG" id="ENOG502QRE8">
    <property type="taxonomic scope" value="Eukaryota"/>
</dbReference>
<dbReference type="HOGENOM" id="CLU_021775_1_1_1"/>
<dbReference type="InParanoid" id="Q9S9P3"/>
<dbReference type="OMA" id="IEVNAFW"/>
<dbReference type="PhylomeDB" id="Q9S9P3"/>
<dbReference type="CD-CODE" id="4299E36E">
    <property type="entry name" value="Nucleolus"/>
</dbReference>
<dbReference type="PRO" id="PR:Q9S9P3"/>
<dbReference type="Proteomes" id="UP000006548">
    <property type="component" value="Chromosome 1"/>
</dbReference>
<dbReference type="ExpressionAtlas" id="Q9S9P3">
    <property type="expression patterns" value="baseline and differential"/>
</dbReference>
<dbReference type="GO" id="GO:0009506">
    <property type="term" value="C:plasmodesma"/>
    <property type="evidence" value="ECO:0007005"/>
    <property type="project" value="TAIR"/>
</dbReference>
<dbReference type="GO" id="GO:0003677">
    <property type="term" value="F:DNA binding"/>
    <property type="evidence" value="ECO:0000314"/>
    <property type="project" value="TAIR"/>
</dbReference>
<dbReference type="GO" id="GO:0003725">
    <property type="term" value="F:double-stranded RNA binding"/>
    <property type="evidence" value="ECO:0000314"/>
    <property type="project" value="TAIR"/>
</dbReference>
<dbReference type="GO" id="GO:0003723">
    <property type="term" value="F:RNA binding"/>
    <property type="evidence" value="ECO:0000314"/>
    <property type="project" value="TAIR"/>
</dbReference>
<dbReference type="GO" id="GO:0080188">
    <property type="term" value="P:gene silencing by siRNA-directed DNA methylation"/>
    <property type="evidence" value="ECO:0000316"/>
    <property type="project" value="TAIR"/>
</dbReference>
<dbReference type="GO" id="GO:0010569">
    <property type="term" value="P:regulation of double-strand break repair via homologous recombination"/>
    <property type="evidence" value="ECO:0000270"/>
    <property type="project" value="TAIR"/>
</dbReference>
<dbReference type="CDD" id="cd12266">
    <property type="entry name" value="RRM_like_XS"/>
    <property type="match status" value="1"/>
</dbReference>
<dbReference type="Gene3D" id="3.30.70.2890">
    <property type="entry name" value="XS domain"/>
    <property type="match status" value="1"/>
</dbReference>
<dbReference type="InterPro" id="IPR045177">
    <property type="entry name" value="FDM1-5/IDN2"/>
</dbReference>
<dbReference type="InterPro" id="IPR005379">
    <property type="entry name" value="FDM1-5/IDN2_XH"/>
</dbReference>
<dbReference type="InterPro" id="IPR005380">
    <property type="entry name" value="XS_domain"/>
</dbReference>
<dbReference type="InterPro" id="IPR038588">
    <property type="entry name" value="XS_domain_sf"/>
</dbReference>
<dbReference type="InterPro" id="IPR005381">
    <property type="entry name" value="Znf-XS_domain"/>
</dbReference>
<dbReference type="PANTHER" id="PTHR21596:SF3">
    <property type="entry name" value="FACTOR OF DNA METHYLATION 1-RELATED"/>
    <property type="match status" value="1"/>
</dbReference>
<dbReference type="PANTHER" id="PTHR21596">
    <property type="entry name" value="RIBONUCLEASE P SUBUNIT P38"/>
    <property type="match status" value="1"/>
</dbReference>
<dbReference type="Pfam" id="PF03469">
    <property type="entry name" value="XH"/>
    <property type="match status" value="1"/>
</dbReference>
<dbReference type="Pfam" id="PF03468">
    <property type="entry name" value="XS"/>
    <property type="match status" value="1"/>
</dbReference>
<dbReference type="Pfam" id="PF03470">
    <property type="entry name" value="zf-XS"/>
    <property type="match status" value="1"/>
</dbReference>
<keyword id="KW-0175">Coiled coil</keyword>
<keyword id="KW-0238">DNA-binding</keyword>
<keyword id="KW-1185">Reference proteome</keyword>
<keyword id="KW-0694">RNA-binding</keyword>
<keyword id="KW-0943">RNA-mediated gene silencing</keyword>
<name>FDM1_ARATH</name>
<protein>
    <recommendedName>
        <fullName evidence="7">Factor of DNA methylation 1</fullName>
    </recommendedName>
    <alternativeName>
        <fullName evidence="8">Protein IDN2 PARALOG 1</fullName>
    </alternativeName>
    <alternativeName>
        <fullName evidence="9">Protein IDN2-LIKE 1</fullName>
    </alternativeName>
</protein>
<gene>
    <name evidence="7" type="primary">FDM1</name>
    <name evidence="9" type="synonym">IDNL1</name>
    <name evidence="8" type="synonym">IDP1</name>
    <name evidence="10" type="ordered locus">At1g15910</name>
    <name evidence="11" type="ORF">T24D18.1</name>
</gene>
<comment type="function">
    <text evidence="3 4 5 6">Forms a complex with IDN2 and FDM2/IDNL2 that is required for RNA-directed DNA methylation (RdDM) and that functions at a downstream step of the RdDM pathway (PubMed:22302148, PubMed:22570638, PubMed:22592791, PubMed:22757778). Required for de novo DNA methylation and 24 nucleotide small interfering RNA (siRNA) accumulation (PubMed:22570638). Binds unmethylated but not methylated DNAs through its coiled-coil domain (PubMed:22757778). May bind double-stranded RNAs (dsRNAs) with 5'-overhangs through its XS domain (PubMed:22302148, PubMed:22757778). However, according to (PubMed:22570638), FMD1 does not bind dsRNAs.</text>
</comment>
<comment type="subunit">
    <text evidence="3 5 6">Homodimer (PubMed:22757778). Interacts with IDN2 (PubMed:22757778, PubMed:22592791) and AGO4 (PubMed:22302148). Forms a complex with IDN2 and FMD2/INDL2 (PubMed:22570638, PubMed:22592791).</text>
</comment>
<comment type="tissue specificity">
    <text evidence="3">Highly expressed in flowers and at lower levels in roots, leaves and stems.</text>
</comment>
<comment type="disruption phenotype">
    <text evidence="3 5">No visible phenotype under normal growth conditions. The double mutants idnl1-1 and idnl2-1 show a late-flowering phenotype and reduced level of DNA methylation (PubMed:22592791). The double mutants fdm1-1 and fdm2-1 show reduced level of DNA methylation and repeat-associated small interfering RNAs (ra-siRNAs) (PubMed:22302148).</text>
</comment>
<proteinExistence type="evidence at protein level"/>
<accession>Q9S9P3</accession>
<organism>
    <name type="scientific">Arabidopsis thaliana</name>
    <name type="common">Mouse-ear cress</name>
    <dbReference type="NCBI Taxonomy" id="3702"/>
    <lineage>
        <taxon>Eukaryota</taxon>
        <taxon>Viridiplantae</taxon>
        <taxon>Streptophyta</taxon>
        <taxon>Embryophyta</taxon>
        <taxon>Tracheophyta</taxon>
        <taxon>Spermatophyta</taxon>
        <taxon>Magnoliopsida</taxon>
        <taxon>eudicotyledons</taxon>
        <taxon>Gunneridae</taxon>
        <taxon>Pentapetalae</taxon>
        <taxon>rosids</taxon>
        <taxon>malvids</taxon>
        <taxon>Brassicales</taxon>
        <taxon>Brassicaceae</taxon>
        <taxon>Camelineae</taxon>
        <taxon>Arabidopsis</taxon>
    </lineage>
</organism>
<reference key="1">
    <citation type="journal article" date="2000" name="Nature">
        <title>Sequence and analysis of chromosome 1 of the plant Arabidopsis thaliana.</title>
        <authorList>
            <person name="Theologis A."/>
            <person name="Ecker J.R."/>
            <person name="Palm C.J."/>
            <person name="Federspiel N.A."/>
            <person name="Kaul S."/>
            <person name="White O."/>
            <person name="Alonso J."/>
            <person name="Altafi H."/>
            <person name="Araujo R."/>
            <person name="Bowman C.L."/>
            <person name="Brooks S.Y."/>
            <person name="Buehler E."/>
            <person name="Chan A."/>
            <person name="Chao Q."/>
            <person name="Chen H."/>
            <person name="Cheuk R.F."/>
            <person name="Chin C.W."/>
            <person name="Chung M.K."/>
            <person name="Conn L."/>
            <person name="Conway A.B."/>
            <person name="Conway A.R."/>
            <person name="Creasy T.H."/>
            <person name="Dewar K."/>
            <person name="Dunn P."/>
            <person name="Etgu P."/>
            <person name="Feldblyum T.V."/>
            <person name="Feng J.-D."/>
            <person name="Fong B."/>
            <person name="Fujii C.Y."/>
            <person name="Gill J.E."/>
            <person name="Goldsmith A.D."/>
            <person name="Haas B."/>
            <person name="Hansen N.F."/>
            <person name="Hughes B."/>
            <person name="Huizar L."/>
            <person name="Hunter J.L."/>
            <person name="Jenkins J."/>
            <person name="Johnson-Hopson C."/>
            <person name="Khan S."/>
            <person name="Khaykin E."/>
            <person name="Kim C.J."/>
            <person name="Koo H.L."/>
            <person name="Kremenetskaia I."/>
            <person name="Kurtz D.B."/>
            <person name="Kwan A."/>
            <person name="Lam B."/>
            <person name="Langin-Hooper S."/>
            <person name="Lee A."/>
            <person name="Lee J.M."/>
            <person name="Lenz C.A."/>
            <person name="Li J.H."/>
            <person name="Li Y.-P."/>
            <person name="Lin X."/>
            <person name="Liu S.X."/>
            <person name="Liu Z.A."/>
            <person name="Luros J.S."/>
            <person name="Maiti R."/>
            <person name="Marziali A."/>
            <person name="Militscher J."/>
            <person name="Miranda M."/>
            <person name="Nguyen M."/>
            <person name="Nierman W.C."/>
            <person name="Osborne B.I."/>
            <person name="Pai G."/>
            <person name="Peterson J."/>
            <person name="Pham P.K."/>
            <person name="Rizzo M."/>
            <person name="Rooney T."/>
            <person name="Rowley D."/>
            <person name="Sakano H."/>
            <person name="Salzberg S.L."/>
            <person name="Schwartz J.R."/>
            <person name="Shinn P."/>
            <person name="Southwick A.M."/>
            <person name="Sun H."/>
            <person name="Tallon L.J."/>
            <person name="Tambunga G."/>
            <person name="Toriumi M.J."/>
            <person name="Town C.D."/>
            <person name="Utterback T."/>
            <person name="Van Aken S."/>
            <person name="Vaysberg M."/>
            <person name="Vysotskaia V.S."/>
            <person name="Walker M."/>
            <person name="Wu D."/>
            <person name="Yu G."/>
            <person name="Fraser C.M."/>
            <person name="Venter J.C."/>
            <person name="Davis R.W."/>
        </authorList>
    </citation>
    <scope>NUCLEOTIDE SEQUENCE [LARGE SCALE GENOMIC DNA]</scope>
    <source>
        <strain>cv. Columbia</strain>
    </source>
</reference>
<reference key="2">
    <citation type="journal article" date="2017" name="Plant J.">
        <title>Araport11: a complete reannotation of the Arabidopsis thaliana reference genome.</title>
        <authorList>
            <person name="Cheng C.Y."/>
            <person name="Krishnakumar V."/>
            <person name="Chan A.P."/>
            <person name="Thibaud-Nissen F."/>
            <person name="Schobel S."/>
            <person name="Town C.D."/>
        </authorList>
    </citation>
    <scope>GENOME REANNOTATION</scope>
    <source>
        <strain>cv. Columbia</strain>
    </source>
</reference>
<reference key="3">
    <citation type="journal article" date="2012" name="Nucleic Acids Res.">
        <title>A subgroup of SGS3-like proteins act redundantly in RNA-directed DNA methylation.</title>
        <authorList>
            <person name="Xie M."/>
            <person name="Ren G."/>
            <person name="Costa-Nunes P."/>
            <person name="Pontes O."/>
            <person name="Yu B."/>
        </authorList>
    </citation>
    <scope>FUNCTION</scope>
    <scope>INTERACTION WITH AGO4</scope>
    <scope>TISSUE SPECIFICITY</scope>
    <scope>DISRUPTION PHENOTYPE</scope>
</reference>
<reference key="4">
    <citation type="journal article" date="2012" name="Plant J.">
        <title>The DNA- and RNA-binding protein FACTOR of DNA METHYLATION 1 requires XH domain-mediated complex formation for its function in RNA-directed DNA methylation.</title>
        <authorList>
            <person name="Xie M."/>
            <person name="Ren G."/>
            <person name="Zhang C."/>
            <person name="Yu B."/>
        </authorList>
    </citation>
    <scope>FUNCTION</scope>
    <scope>SUBUNIT</scope>
    <scope>INTERACTION WITH IDN2</scope>
</reference>
<reference key="5">
    <citation type="journal article" date="2012" name="PLoS Genet.">
        <title>IDN2 and its paralogs form a complex required for RNA-directed DNA methylation.</title>
        <authorList>
            <person name="Zhang C.J."/>
            <person name="Ning Y.Q."/>
            <person name="Zhang S.W."/>
            <person name="Chen Q."/>
            <person name="Shao C.R."/>
            <person name="Guo Y.W."/>
            <person name="Zhou J.X."/>
            <person name="Li L."/>
            <person name="Chen S."/>
            <person name="He X.J."/>
        </authorList>
    </citation>
    <scope>IDENTIFICATION BY MASS SPECTROMETRY</scope>
    <scope>FUNCTION</scope>
    <scope>SUBUNIT</scope>
</reference>
<reference key="6">
    <citation type="journal article" date="2012" name="Proc. Natl. Acad. Sci. U.S.A.">
        <title>INVOLVED IN DE NOVO 2-containing complex involved in RNA-directed DNA methylation in Arabidopsis.</title>
        <authorList>
            <person name="Ausin I."/>
            <person name="Greenberg M.V."/>
            <person name="Simanshu D.K."/>
            <person name="Hale C.J."/>
            <person name="Vashisht A.A."/>
            <person name="Simon S.A."/>
            <person name="Lee T.F."/>
            <person name="Feng S."/>
            <person name="Espanola S.D."/>
            <person name="Meyers B.C."/>
            <person name="Wohlschlegel J.A."/>
            <person name="Patel D.J."/>
            <person name="Jacobsen S.E."/>
        </authorList>
    </citation>
    <scope>IDENTIFICATION BY MASS SPECTROMETRY</scope>
    <scope>FUNCTION</scope>
    <scope>SUBUNIT</scope>
    <scope>DISRUPTION PHENOTYPE</scope>
</reference>
<feature type="chain" id="PRO_0000430681" description="Factor of DNA methylation 1">
    <location>
        <begin position="1"/>
        <end position="634"/>
    </location>
</feature>
<feature type="region of interest" description="Disordered" evidence="2">
    <location>
        <begin position="349"/>
        <end position="375"/>
    </location>
</feature>
<feature type="coiled-coil region" evidence="1">
    <location>
        <begin position="288"/>
        <end position="469"/>
    </location>
</feature>
<feature type="compositionally biased region" description="Basic and acidic residues" evidence="2">
    <location>
        <begin position="349"/>
        <end position="364"/>
    </location>
</feature>
<sequence length="634" mass="72635">MSISDEEAEISESEIEDYSETPYRLLRDGTYKVKVNGQLRCPFCAGKKKQDYKYKELYAHATGVSKGSATRSALQKANHLALAMFLENELAGYAEPVPRPPVVPPQLDETEPNPHNVYVWPWMGIVVNPLKEADDKELLLDSAYWLQTLSKFKPIEVNAFWVEQDSIVGVIAKFNGDWSGFAGATELEKEFETQGSSKKEWTERSGDSESKAYGWCARADDFESQGPIGEYLSKEGQLRTVSDISQKNVQDRNTVLEELSDMIAMTNEDLNKVQYSYNRTAMSLQRVLDEKKNLHQAFADETKKMQQMSLRHIQKILYDKEKLSNELDRKMRDLESRAKQLEKHEALTELDRQKLDEDKRKSDAMNKSLQLASREQKKADESVLRLVEEHQRQKEDALNKILLLEKQLDTKQTLEMEIQELKGKLQVMKHLGDDDDEAVQKKMKEMNDELDDKKAELEGLESMNSVLMTKERQSNDEIQAARKKLIAGLTGLLGAETDIGVKRMGELDEKPFLDVCKLRYSANEAAVEAATLCSTWQENLKNPSWQPFKHEGTGDGAEEVVDEDDEQLKKLKREWGKEVHNAVKTALVEMNEYNASGRYTTPELWNFKEGRKATLKEVITFISNDIKILKRKRT</sequence>